<name>GBRAP_RABIT</name>
<gene>
    <name evidence="1" type="primary">GABARAP</name>
</gene>
<protein>
    <recommendedName>
        <fullName evidence="1">Gamma-aminobutyric acid receptor-associated protein</fullName>
    </recommendedName>
    <alternativeName>
        <fullName>GABA(A) receptor-associated protein</fullName>
    </alternativeName>
</protein>
<keyword id="KW-0053">Apoptosis</keyword>
<keyword id="KW-0072">Autophagy</keyword>
<keyword id="KW-0963">Cytoplasm</keyword>
<keyword id="KW-0968">Cytoplasmic vesicle</keyword>
<keyword id="KW-0206">Cytoskeleton</keyword>
<keyword id="KW-0333">Golgi apparatus</keyword>
<keyword id="KW-0449">Lipoprotein</keyword>
<keyword id="KW-0472">Membrane</keyword>
<keyword id="KW-0493">Microtubule</keyword>
<keyword id="KW-0653">Protein transport</keyword>
<keyword id="KW-1185">Reference proteome</keyword>
<keyword id="KW-0813">Transport</keyword>
<accession>Q8MK68</accession>
<organism>
    <name type="scientific">Oryctolagus cuniculus</name>
    <name type="common">Rabbit</name>
    <dbReference type="NCBI Taxonomy" id="9986"/>
    <lineage>
        <taxon>Eukaryota</taxon>
        <taxon>Metazoa</taxon>
        <taxon>Chordata</taxon>
        <taxon>Craniata</taxon>
        <taxon>Vertebrata</taxon>
        <taxon>Euteleostomi</taxon>
        <taxon>Mammalia</taxon>
        <taxon>Eutheria</taxon>
        <taxon>Euarchontoglires</taxon>
        <taxon>Glires</taxon>
        <taxon>Lagomorpha</taxon>
        <taxon>Leporidae</taxon>
        <taxon>Oryctolagus</taxon>
    </lineage>
</organism>
<proteinExistence type="inferred from homology"/>
<dbReference type="EMBL" id="AY094174">
    <property type="protein sequence ID" value="AAM22501.1"/>
    <property type="molecule type" value="mRNA"/>
</dbReference>
<dbReference type="RefSeq" id="NP_001075611.1">
    <property type="nucleotide sequence ID" value="NM_001082142.1"/>
</dbReference>
<dbReference type="BMRB" id="Q8MK68"/>
<dbReference type="SMR" id="Q8MK68"/>
<dbReference type="FunCoup" id="Q8MK68">
    <property type="interactions" value="1302"/>
</dbReference>
<dbReference type="STRING" id="9986.ENSOCUP00000006049"/>
<dbReference type="PaxDb" id="9986-ENSOCUP00000006049"/>
<dbReference type="Ensembl" id="ENSOCUT00000006994.2">
    <property type="protein sequence ID" value="ENSOCUP00000006049.2"/>
    <property type="gene ID" value="ENSOCUG00000006997.2"/>
</dbReference>
<dbReference type="GeneID" id="100008883"/>
<dbReference type="KEGG" id="ocu:100008883"/>
<dbReference type="CTD" id="11337"/>
<dbReference type="eggNOG" id="KOG1654">
    <property type="taxonomic scope" value="Eukaryota"/>
</dbReference>
<dbReference type="GeneTree" id="ENSGT00940000157496"/>
<dbReference type="HOGENOM" id="CLU_119276_0_0_1"/>
<dbReference type="InParanoid" id="Q8MK68"/>
<dbReference type="OMA" id="AVYQEHK"/>
<dbReference type="OrthoDB" id="6738456at2759"/>
<dbReference type="TreeFam" id="TF314556"/>
<dbReference type="Proteomes" id="UP000001811">
    <property type="component" value="Chromosome 19"/>
</dbReference>
<dbReference type="Bgee" id="ENSOCUG00000006997">
    <property type="expression patterns" value="Expressed in blood and 15 other cell types or tissues"/>
</dbReference>
<dbReference type="GO" id="GO:0015629">
    <property type="term" value="C:actin cytoskeleton"/>
    <property type="evidence" value="ECO:0007669"/>
    <property type="project" value="Ensembl"/>
</dbReference>
<dbReference type="GO" id="GO:0005776">
    <property type="term" value="C:autophagosome"/>
    <property type="evidence" value="ECO:0000250"/>
    <property type="project" value="UniProtKB"/>
</dbReference>
<dbReference type="GO" id="GO:0000421">
    <property type="term" value="C:autophagosome membrane"/>
    <property type="evidence" value="ECO:0007669"/>
    <property type="project" value="Ensembl"/>
</dbReference>
<dbReference type="GO" id="GO:0005930">
    <property type="term" value="C:axoneme"/>
    <property type="evidence" value="ECO:0000250"/>
    <property type="project" value="UniProtKB"/>
</dbReference>
<dbReference type="GO" id="GO:0031410">
    <property type="term" value="C:cytoplasmic vesicle"/>
    <property type="evidence" value="ECO:0007669"/>
    <property type="project" value="UniProtKB-KW"/>
</dbReference>
<dbReference type="GO" id="GO:0098982">
    <property type="term" value="C:GABA-ergic synapse"/>
    <property type="evidence" value="ECO:0007669"/>
    <property type="project" value="Ensembl"/>
</dbReference>
<dbReference type="GO" id="GO:0000139">
    <property type="term" value="C:Golgi membrane"/>
    <property type="evidence" value="ECO:0007669"/>
    <property type="project" value="UniProtKB-SubCell"/>
</dbReference>
<dbReference type="GO" id="GO:0005764">
    <property type="term" value="C:lysosome"/>
    <property type="evidence" value="ECO:0007669"/>
    <property type="project" value="Ensembl"/>
</dbReference>
<dbReference type="GO" id="GO:0005874">
    <property type="term" value="C:microtubule"/>
    <property type="evidence" value="ECO:0007669"/>
    <property type="project" value="UniProtKB-KW"/>
</dbReference>
<dbReference type="GO" id="GO:0005875">
    <property type="term" value="C:microtubule associated complex"/>
    <property type="evidence" value="ECO:0007669"/>
    <property type="project" value="Ensembl"/>
</dbReference>
<dbReference type="GO" id="GO:0005886">
    <property type="term" value="C:plasma membrane"/>
    <property type="evidence" value="ECO:0007669"/>
    <property type="project" value="Ensembl"/>
</dbReference>
<dbReference type="GO" id="GO:0005790">
    <property type="term" value="C:smooth endoplasmic reticulum"/>
    <property type="evidence" value="ECO:0007669"/>
    <property type="project" value="Ensembl"/>
</dbReference>
<dbReference type="GO" id="GO:0097225">
    <property type="term" value="C:sperm midpiece"/>
    <property type="evidence" value="ECO:0007669"/>
    <property type="project" value="Ensembl"/>
</dbReference>
<dbReference type="GO" id="GO:0048487">
    <property type="term" value="F:beta-tubulin binding"/>
    <property type="evidence" value="ECO:0007669"/>
    <property type="project" value="Ensembl"/>
</dbReference>
<dbReference type="GO" id="GO:0050811">
    <property type="term" value="F:GABA receptor binding"/>
    <property type="evidence" value="ECO:0007669"/>
    <property type="project" value="Ensembl"/>
</dbReference>
<dbReference type="GO" id="GO:0008017">
    <property type="term" value="F:microtubule binding"/>
    <property type="evidence" value="ECO:0007669"/>
    <property type="project" value="Ensembl"/>
</dbReference>
<dbReference type="GO" id="GO:0008429">
    <property type="term" value="F:phosphatidylethanolamine binding"/>
    <property type="evidence" value="ECO:0007669"/>
    <property type="project" value="Ensembl"/>
</dbReference>
<dbReference type="GO" id="GO:0031625">
    <property type="term" value="F:ubiquitin protein ligase binding"/>
    <property type="evidence" value="ECO:0007669"/>
    <property type="project" value="Ensembl"/>
</dbReference>
<dbReference type="GO" id="GO:0006914">
    <property type="term" value="P:autophagy"/>
    <property type="evidence" value="ECO:0007669"/>
    <property type="project" value="UniProtKB-KW"/>
</dbReference>
<dbReference type="GO" id="GO:0008625">
    <property type="term" value="P:extrinsic apoptotic signaling pathway via death domain receptors"/>
    <property type="evidence" value="ECO:0000250"/>
    <property type="project" value="UniProtKB"/>
</dbReference>
<dbReference type="GO" id="GO:0000226">
    <property type="term" value="P:microtubule cytoskeleton organization"/>
    <property type="evidence" value="ECO:0007669"/>
    <property type="project" value="Ensembl"/>
</dbReference>
<dbReference type="GO" id="GO:0032436">
    <property type="term" value="P:positive regulation of proteasomal ubiquitin-dependent protein catabolic process"/>
    <property type="evidence" value="ECO:0000250"/>
    <property type="project" value="UniProtKB"/>
</dbReference>
<dbReference type="GO" id="GO:1902524">
    <property type="term" value="P:positive regulation of protein K48-linked ubiquitination"/>
    <property type="evidence" value="ECO:0000250"/>
    <property type="project" value="UniProtKB"/>
</dbReference>
<dbReference type="GO" id="GO:0015031">
    <property type="term" value="P:protein transport"/>
    <property type="evidence" value="ECO:0007669"/>
    <property type="project" value="UniProtKB-KW"/>
</dbReference>
<dbReference type="GO" id="GO:0098696">
    <property type="term" value="P:regulation of neurotransmitter receptor localization to postsynaptic specialization membrane"/>
    <property type="evidence" value="ECO:0007669"/>
    <property type="project" value="Ensembl"/>
</dbReference>
<dbReference type="GO" id="GO:0035020">
    <property type="term" value="P:regulation of Rac protein signal transduction"/>
    <property type="evidence" value="ECO:0000250"/>
    <property type="project" value="UniProtKB"/>
</dbReference>
<dbReference type="CDD" id="cd17232">
    <property type="entry name" value="Ubl_ATG8_GABARAP"/>
    <property type="match status" value="1"/>
</dbReference>
<dbReference type="FunFam" id="3.10.20.90:FF:000037">
    <property type="entry name" value="Gamma-aminobutyric acid receptor-associated protein-like 1"/>
    <property type="match status" value="1"/>
</dbReference>
<dbReference type="Gene3D" id="3.10.20.90">
    <property type="entry name" value="Phosphatidylinositol 3-kinase Catalytic Subunit, Chain A, domain 1"/>
    <property type="match status" value="1"/>
</dbReference>
<dbReference type="InterPro" id="IPR004241">
    <property type="entry name" value="Atg8-like"/>
</dbReference>
<dbReference type="InterPro" id="IPR029071">
    <property type="entry name" value="Ubiquitin-like_domsf"/>
</dbReference>
<dbReference type="PANTHER" id="PTHR10969">
    <property type="entry name" value="MICROTUBULE-ASSOCIATED PROTEINS 1A/1B LIGHT CHAIN 3-RELATED"/>
    <property type="match status" value="1"/>
</dbReference>
<dbReference type="Pfam" id="PF02991">
    <property type="entry name" value="ATG8"/>
    <property type="match status" value="1"/>
</dbReference>
<dbReference type="SUPFAM" id="SSF54236">
    <property type="entry name" value="Ubiquitin-like"/>
    <property type="match status" value="1"/>
</dbReference>
<reference key="1">
    <citation type="submission" date="2002-04" db="EMBL/GenBank/DDBJ databases">
        <title>Activity-dependent expression of GABARAP in rabbit flocculus modulated by optokinetic stimulation.</title>
        <authorList>
            <person name="Qian Z."/>
            <person name="Barmack N.H."/>
        </authorList>
    </citation>
    <scope>NUCLEOTIDE SEQUENCE [MRNA]</scope>
</reference>
<comment type="function">
    <text evidence="1">Ubiquitin-like modifier that plays a role in intracellular transport of GABA(A) receptors and its interaction with the cytoskeleton. Involved in autophagy: while LC3s are involved in elongation of the phagophore membrane, the GABARAP/GATE-16 subfamily is essential for a later stage in autophagosome maturation. Through its interaction with the reticulophagy receptor TEX264, participates in the remodeling of subdomains of the endoplasmic reticulum into autophagosomes upon nutrient stress, which then fuse with lysosomes for endoplasmic reticulum turnover. Also required for the local activation of the CUL3(KBTBD6/7) E3 ubiquitin ligase complex, regulating ubiquitination and degradation of TIAM1, a guanyl-nucleotide exchange factor (GEF) that activates RAC1 and downstream signal transduction. Thereby, regulates different biological processes including the organization of the cytoskeleton, cell migration and proliferation. Involved in apoptosis.</text>
</comment>
<comment type="subunit">
    <text evidence="1 2 3">Interacts with GPHN and NSF (By similarity). Interacts with ATG3, ATG7 and ATG13. Interacts with alpha-tubulin (By similarity). Interacts with beta-tubulin (By similarity). Interacts with GABRG2. Interacts with RB1CC1. Interacts with ULK1. Interacts with CALR. Interacts with DDX47. Interacts with TP53INP1 and TP53INP2. Interacts with TBC1D5 (By similarity). Interacts with TBC1D25 (By similarity). Directly interacts with SQSTM1. Interacts with MAPK15. Interacts with TECPR2. Interacts with PCM1. Interacts with TRIM5 and TRIM21. Interacts with MEFV (By similarity). Interacts with KIF21B (By similarity). Interacts with WDFY3; this interaction is required for WDFY3 recruitment to MAP1LC3B-positive p62/SQSTM1 bodies. Interacts with FLCN; interaction regulates autophagy (By similarity). Interacts with UBA5 (By similarity). Interacts with KBTBD6 and KBTBD7; the interaction is direct and required for the ubiquitination of TIAM1 (By similarity). Interacts with reticulophagy regulators RETREG1, RETREG2 and RETREG3 (By similarity). Interacts with IRGM (By similarity). Interacts with STX17 (By similarity). Interacts with CT55; this interaction may be important for GABARAP protein stability (By similarity). Interacts with DNM2 (By similarity). Interacts with NCOA4 (via C-terminus) (By similarity).</text>
</comment>
<comment type="subcellular location">
    <subcellularLocation>
        <location evidence="2">Endomembrane system</location>
    </subcellularLocation>
    <subcellularLocation>
        <location evidence="2">Cytoplasm</location>
        <location evidence="2">Cytoskeleton</location>
    </subcellularLocation>
    <subcellularLocation>
        <location evidence="2">Golgi apparatus membrane</location>
    </subcellularLocation>
    <subcellularLocation>
        <location evidence="1">Cytoplasmic vesicle</location>
        <location evidence="1">Autophagosome</location>
    </subcellularLocation>
    <subcellularLocation>
        <location evidence="2">Cytoplasmic vesicle</location>
    </subcellularLocation>
    <text evidence="2 3">Largely associated with intracellular membrane structures including the Golgi apparatus and postsynaptic cisternae. Colocalizes with microtubules (By similarity). Also localizes to discrete punctae along the ciliary axoneme (By similarity).</text>
</comment>
<comment type="PTM">
    <text evidence="1 3">The precursor molecule is cleaved by ATG4 (ATG4A, ATG4B, ATG4C or ATG4D) to expose the glycine at the C-terminus and form the cytosolic form, GABARAP-I. The processed form is then activated by APG7L/ATG7, transferred to ATG3 and conjugated to phosphatidylethanolamine (PE) phospholipid to form the membrane-bound form, GABARAP-II. During non-canonical autophagy, the processed form is conjugated to phosphatidylserine (PS) phospholipid. ATG4 proteins also mediate the delipidation of PE-conjugated forms. In addition, ATG4B and ATG4D mediate delipidation of ATG8 proteins conjugated to PS during non-canonical autophagy. ATG4B constitutes the major protein for proteolytic activation (By similarity). ATG4D is the main enzyme for delipidation activity (By similarity).</text>
</comment>
<comment type="similarity">
    <text evidence="4">Belongs to the ATG8 family.</text>
</comment>
<sequence>MKFVYKEEHPFEKRRSEGEKIRKKYPDRVPVIVEKAPKARIGDLDKKKYLVPSDLTVGQFYFLIRKRIHLRAEDALFFFVNNVIPPTSATMGQLYQEHHEEDFFLYIAYSDESVYGL</sequence>
<feature type="chain" id="PRO_0000212365" description="Gamma-aminobutyric acid receptor-associated protein">
    <location>
        <begin position="1"/>
        <end position="116"/>
    </location>
</feature>
<feature type="propeptide" id="PRO_0000423067" description="Removed in mature form" evidence="1">
    <location>
        <position position="117"/>
    </location>
</feature>
<feature type="region of interest" description="Interaction with beta-tubulin" evidence="1">
    <location>
        <begin position="1"/>
        <end position="22"/>
    </location>
</feature>
<feature type="region of interest" description="Interaction with GPHN" evidence="3">
    <location>
        <begin position="36"/>
        <end position="117"/>
    </location>
</feature>
<feature type="region of interest" description="Interaction with GABRG2" evidence="1">
    <location>
        <begin position="36"/>
        <end position="68"/>
    </location>
</feature>
<feature type="region of interest" description="Interaction with LIR (LC3 nteracting Region) motif of ATG3" evidence="1">
    <location>
        <begin position="48"/>
        <end position="50"/>
    </location>
</feature>
<feature type="site" description="Interaction with LIR (LC3 nteracting Region) motif of ATG3" evidence="1">
    <location>
        <position position="17"/>
    </location>
</feature>
<feature type="site" description="Interaction with LIR (LC3 nteracting Region) motif of ATG3" evidence="1">
    <location>
        <position position="28"/>
    </location>
</feature>
<feature type="site" description="Cleavage; by ATG4B" evidence="1">
    <location>
        <begin position="116"/>
        <end position="117"/>
    </location>
</feature>
<feature type="lipid moiety-binding region" description="Phosphatidylethanolamine amidated glycine; alternate" evidence="1">
    <location>
        <position position="116"/>
    </location>
</feature>
<feature type="lipid moiety-binding region" description="Phosphatidylserine amidated glycine; alternate" evidence="1">
    <location>
        <position position="116"/>
    </location>
</feature>
<evidence type="ECO:0000250" key="1">
    <source>
        <dbReference type="UniProtKB" id="O95166"/>
    </source>
</evidence>
<evidence type="ECO:0000250" key="2">
    <source>
        <dbReference type="UniProtKB" id="P60517"/>
    </source>
</evidence>
<evidence type="ECO:0000250" key="3">
    <source>
        <dbReference type="UniProtKB" id="Q9DCD6"/>
    </source>
</evidence>
<evidence type="ECO:0000305" key="4"/>